<dbReference type="EC" id="2.1.3.2" evidence="1"/>
<dbReference type="EMBL" id="CP000921">
    <property type="protein sequence ID" value="ACO23875.1"/>
    <property type="molecule type" value="Genomic_DNA"/>
</dbReference>
<dbReference type="RefSeq" id="WP_001293845.1">
    <property type="nucleotide sequence ID" value="NC_012469.1"/>
</dbReference>
<dbReference type="SMR" id="C1CR29"/>
<dbReference type="KEGG" id="snt:SPT_0950"/>
<dbReference type="HOGENOM" id="CLU_043846_2_1_9"/>
<dbReference type="UniPathway" id="UPA00070">
    <property type="reaction ID" value="UER00116"/>
</dbReference>
<dbReference type="GO" id="GO:0005829">
    <property type="term" value="C:cytosol"/>
    <property type="evidence" value="ECO:0007669"/>
    <property type="project" value="TreeGrafter"/>
</dbReference>
<dbReference type="GO" id="GO:0016597">
    <property type="term" value="F:amino acid binding"/>
    <property type="evidence" value="ECO:0007669"/>
    <property type="project" value="InterPro"/>
</dbReference>
<dbReference type="GO" id="GO:0004070">
    <property type="term" value="F:aspartate carbamoyltransferase activity"/>
    <property type="evidence" value="ECO:0007669"/>
    <property type="project" value="UniProtKB-UniRule"/>
</dbReference>
<dbReference type="GO" id="GO:0006207">
    <property type="term" value="P:'de novo' pyrimidine nucleobase biosynthetic process"/>
    <property type="evidence" value="ECO:0007669"/>
    <property type="project" value="InterPro"/>
</dbReference>
<dbReference type="GO" id="GO:0044205">
    <property type="term" value="P:'de novo' UMP biosynthetic process"/>
    <property type="evidence" value="ECO:0007669"/>
    <property type="project" value="UniProtKB-UniRule"/>
</dbReference>
<dbReference type="GO" id="GO:0006520">
    <property type="term" value="P:amino acid metabolic process"/>
    <property type="evidence" value="ECO:0007669"/>
    <property type="project" value="InterPro"/>
</dbReference>
<dbReference type="FunFam" id="3.40.50.1370:FF:000011">
    <property type="entry name" value="Aspartate carbamoyltransferase"/>
    <property type="match status" value="1"/>
</dbReference>
<dbReference type="Gene3D" id="3.40.50.1370">
    <property type="entry name" value="Aspartate/ornithine carbamoyltransferase"/>
    <property type="match status" value="2"/>
</dbReference>
<dbReference type="HAMAP" id="MF_00001">
    <property type="entry name" value="Asp_carb_tr"/>
    <property type="match status" value="1"/>
</dbReference>
<dbReference type="InterPro" id="IPR006132">
    <property type="entry name" value="Asp/Orn_carbamoyltranf_P-bd"/>
</dbReference>
<dbReference type="InterPro" id="IPR006130">
    <property type="entry name" value="Asp/Orn_carbamoylTrfase"/>
</dbReference>
<dbReference type="InterPro" id="IPR036901">
    <property type="entry name" value="Asp/Orn_carbamoylTrfase_sf"/>
</dbReference>
<dbReference type="InterPro" id="IPR002082">
    <property type="entry name" value="Asp_carbamoyltransf"/>
</dbReference>
<dbReference type="InterPro" id="IPR006131">
    <property type="entry name" value="Asp_carbamoyltransf_Asp/Orn-bd"/>
</dbReference>
<dbReference type="NCBIfam" id="TIGR00670">
    <property type="entry name" value="asp_carb_tr"/>
    <property type="match status" value="1"/>
</dbReference>
<dbReference type="NCBIfam" id="NF002032">
    <property type="entry name" value="PRK00856.1"/>
    <property type="match status" value="1"/>
</dbReference>
<dbReference type="PANTHER" id="PTHR45753:SF6">
    <property type="entry name" value="ASPARTATE CARBAMOYLTRANSFERASE"/>
    <property type="match status" value="1"/>
</dbReference>
<dbReference type="PANTHER" id="PTHR45753">
    <property type="entry name" value="ORNITHINE CARBAMOYLTRANSFERASE, MITOCHONDRIAL"/>
    <property type="match status" value="1"/>
</dbReference>
<dbReference type="Pfam" id="PF00185">
    <property type="entry name" value="OTCace"/>
    <property type="match status" value="1"/>
</dbReference>
<dbReference type="Pfam" id="PF02729">
    <property type="entry name" value="OTCace_N"/>
    <property type="match status" value="1"/>
</dbReference>
<dbReference type="PRINTS" id="PR00100">
    <property type="entry name" value="AOTCASE"/>
</dbReference>
<dbReference type="PRINTS" id="PR00101">
    <property type="entry name" value="ATCASE"/>
</dbReference>
<dbReference type="SUPFAM" id="SSF53671">
    <property type="entry name" value="Aspartate/ornithine carbamoyltransferase"/>
    <property type="match status" value="1"/>
</dbReference>
<dbReference type="PROSITE" id="PS00097">
    <property type="entry name" value="CARBAMOYLTRANSFERASE"/>
    <property type="match status" value="1"/>
</dbReference>
<comment type="function">
    <text evidence="1">Catalyzes the condensation of carbamoyl phosphate and aspartate to form carbamoyl aspartate and inorganic phosphate, the committed step in the de novo pyrimidine nucleotide biosynthesis pathway.</text>
</comment>
<comment type="catalytic activity">
    <reaction evidence="1">
        <text>carbamoyl phosphate + L-aspartate = N-carbamoyl-L-aspartate + phosphate + H(+)</text>
        <dbReference type="Rhea" id="RHEA:20013"/>
        <dbReference type="ChEBI" id="CHEBI:15378"/>
        <dbReference type="ChEBI" id="CHEBI:29991"/>
        <dbReference type="ChEBI" id="CHEBI:32814"/>
        <dbReference type="ChEBI" id="CHEBI:43474"/>
        <dbReference type="ChEBI" id="CHEBI:58228"/>
        <dbReference type="EC" id="2.1.3.2"/>
    </reaction>
</comment>
<comment type="pathway">
    <text evidence="1">Pyrimidine metabolism; UMP biosynthesis via de novo pathway; (S)-dihydroorotate from bicarbonate: step 2/3.</text>
</comment>
<comment type="subunit">
    <text evidence="1">Heterododecamer (2C3:3R2) of six catalytic PyrB chains organized as two trimers (C3), and six regulatory PyrI chains organized as three dimers (R2).</text>
</comment>
<comment type="similarity">
    <text evidence="1">Belongs to the aspartate/ornithine carbamoyltransferase superfamily. ATCase family.</text>
</comment>
<evidence type="ECO:0000255" key="1">
    <source>
        <dbReference type="HAMAP-Rule" id="MF_00001"/>
    </source>
</evidence>
<feature type="chain" id="PRO_1000191916" description="Aspartate carbamoyltransferase catalytic subunit">
    <location>
        <begin position="1"/>
        <end position="307"/>
    </location>
</feature>
<feature type="binding site" evidence="1">
    <location>
        <position position="56"/>
    </location>
    <ligand>
        <name>carbamoyl phosphate</name>
        <dbReference type="ChEBI" id="CHEBI:58228"/>
    </ligand>
</feature>
<feature type="binding site" evidence="1">
    <location>
        <position position="57"/>
    </location>
    <ligand>
        <name>carbamoyl phosphate</name>
        <dbReference type="ChEBI" id="CHEBI:58228"/>
    </ligand>
</feature>
<feature type="binding site" evidence="1">
    <location>
        <position position="84"/>
    </location>
    <ligand>
        <name>L-aspartate</name>
        <dbReference type="ChEBI" id="CHEBI:29991"/>
    </ligand>
</feature>
<feature type="binding site" evidence="1">
    <location>
        <position position="106"/>
    </location>
    <ligand>
        <name>carbamoyl phosphate</name>
        <dbReference type="ChEBI" id="CHEBI:58228"/>
    </ligand>
</feature>
<feature type="binding site" evidence="1">
    <location>
        <position position="136"/>
    </location>
    <ligand>
        <name>carbamoyl phosphate</name>
        <dbReference type="ChEBI" id="CHEBI:58228"/>
    </ligand>
</feature>
<feature type="binding site" evidence="1">
    <location>
        <position position="139"/>
    </location>
    <ligand>
        <name>carbamoyl phosphate</name>
        <dbReference type="ChEBI" id="CHEBI:58228"/>
    </ligand>
</feature>
<feature type="binding site" evidence="1">
    <location>
        <position position="169"/>
    </location>
    <ligand>
        <name>L-aspartate</name>
        <dbReference type="ChEBI" id="CHEBI:29991"/>
    </ligand>
</feature>
<feature type="binding site" evidence="1">
    <location>
        <position position="221"/>
    </location>
    <ligand>
        <name>L-aspartate</name>
        <dbReference type="ChEBI" id="CHEBI:29991"/>
    </ligand>
</feature>
<feature type="binding site" evidence="1">
    <location>
        <position position="262"/>
    </location>
    <ligand>
        <name>carbamoyl phosphate</name>
        <dbReference type="ChEBI" id="CHEBI:58228"/>
    </ligand>
</feature>
<feature type="binding site" evidence="1">
    <location>
        <position position="263"/>
    </location>
    <ligand>
        <name>carbamoyl phosphate</name>
        <dbReference type="ChEBI" id="CHEBI:58228"/>
    </ligand>
</feature>
<keyword id="KW-0665">Pyrimidine biosynthesis</keyword>
<keyword id="KW-0808">Transferase</keyword>
<proteinExistence type="inferred from homology"/>
<accession>C1CR29</accession>
<protein>
    <recommendedName>
        <fullName evidence="1">Aspartate carbamoyltransferase catalytic subunit</fullName>
        <ecNumber evidence="1">2.1.3.2</ecNumber>
    </recommendedName>
    <alternativeName>
        <fullName evidence="1">Aspartate transcarbamylase</fullName>
        <shortName evidence="1">ATCase</shortName>
    </alternativeName>
</protein>
<name>PYRB_STRZT</name>
<reference key="1">
    <citation type="journal article" date="2010" name="Genome Biol.">
        <title>Structure and dynamics of the pan-genome of Streptococcus pneumoniae and closely related species.</title>
        <authorList>
            <person name="Donati C."/>
            <person name="Hiller N.L."/>
            <person name="Tettelin H."/>
            <person name="Muzzi A."/>
            <person name="Croucher N.J."/>
            <person name="Angiuoli S.V."/>
            <person name="Oggioni M."/>
            <person name="Dunning Hotopp J.C."/>
            <person name="Hu F.Z."/>
            <person name="Riley D.R."/>
            <person name="Covacci A."/>
            <person name="Mitchell T.J."/>
            <person name="Bentley S.D."/>
            <person name="Kilian M."/>
            <person name="Ehrlich G.D."/>
            <person name="Rappuoli R."/>
            <person name="Moxon E.R."/>
            <person name="Masignani V."/>
        </authorList>
    </citation>
    <scope>NUCLEOTIDE SEQUENCE [LARGE SCALE GENOMIC DNA]</scope>
    <source>
        <strain>Taiwan19F-14</strain>
    </source>
</reference>
<gene>
    <name evidence="1" type="primary">pyrB</name>
    <name type="ordered locus">SPT_0950</name>
</gene>
<sequence>MSENQQALNHVVSMEDLTVDQVMKLIKRGIEFKNGAQLPYEDHPIVSNLFFEDSTRTHKSFEVAEIKLGLERLDFDVKTSSVNKGETLYDTILTLSALGVDVCVIRHPEVDYYRELIASPTITTSIINGGDGSGQHPSQSLLDLMTIYEEFGHFEGLKVAIAGDLDHSRVAKSNMQILKRLGSELFFAGPEEWRSQEFADYGQFVTIDEIIDQVDVMMFLRVQHERHDSGAVFSKEDYHAQHGLTQERYDRLKETAILMHPAPINRDVEIADHLVEAPKSRIVQQMTNGVFVRMAILESVLASRNAN</sequence>
<organism>
    <name type="scientific">Streptococcus pneumoniae (strain Taiwan19F-14)</name>
    <dbReference type="NCBI Taxonomy" id="487213"/>
    <lineage>
        <taxon>Bacteria</taxon>
        <taxon>Bacillati</taxon>
        <taxon>Bacillota</taxon>
        <taxon>Bacilli</taxon>
        <taxon>Lactobacillales</taxon>
        <taxon>Streptococcaceae</taxon>
        <taxon>Streptococcus</taxon>
    </lineage>
</organism>